<proteinExistence type="inferred from homology"/>
<sequence>MTTRIDTKFAELKAEGRPALVTYFMGGDPDLETALKVMKALPKAGADVIELGMPFSDPMADGPAIQAAGLRALNAGQTLAKTLYMAAEFRKEDDTTPIVMMGYYNLIYIYGVERFLTDAKASGVDGLIVVDLPSEMDAELCIPAMKAGINFIRLTTPTTDDKRLPKVLHNSSGFVYYVSMNGITGAAIADTAKVGEAVRHIKKSTDLPICVGFGVKTPEQAAAIATHADGVVVGTAIVNAIAGELDEKGKAKGDPVAAATRLVHALAESVRATRLEAAQ</sequence>
<protein>
    <recommendedName>
        <fullName evidence="1">Tryptophan synthase alpha chain</fullName>
        <ecNumber evidence="1">4.2.1.20</ecNumber>
    </recommendedName>
</protein>
<reference key="1">
    <citation type="journal article" date="2002" name="Proc. Natl. Acad. Sci. U.S.A.">
        <title>The genome sequence of the facultative intracellular pathogen Brucella melitensis.</title>
        <authorList>
            <person name="DelVecchio V.G."/>
            <person name="Kapatral V."/>
            <person name="Redkar R.J."/>
            <person name="Patra G."/>
            <person name="Mujer C."/>
            <person name="Los T."/>
            <person name="Ivanova N."/>
            <person name="Anderson I."/>
            <person name="Bhattacharyya A."/>
            <person name="Lykidis A."/>
            <person name="Reznik G."/>
            <person name="Jablonski L."/>
            <person name="Larsen N."/>
            <person name="D'Souza M."/>
            <person name="Bernal A."/>
            <person name="Mazur M."/>
            <person name="Goltsman E."/>
            <person name="Selkov E."/>
            <person name="Elzer P.H."/>
            <person name="Hagius S."/>
            <person name="O'Callaghan D."/>
            <person name="Letesson J.-J."/>
            <person name="Haselkorn R."/>
            <person name="Kyrpides N.C."/>
            <person name="Overbeek R."/>
        </authorList>
    </citation>
    <scope>NUCLEOTIDE SEQUENCE [LARGE SCALE GENOMIC DNA]</scope>
    <source>
        <strain>ATCC 23456 / CCUG 17765 / NCTC 10094 / 16M</strain>
    </source>
</reference>
<evidence type="ECO:0000255" key="1">
    <source>
        <dbReference type="HAMAP-Rule" id="MF_00131"/>
    </source>
</evidence>
<evidence type="ECO:0000305" key="2"/>
<keyword id="KW-0028">Amino-acid biosynthesis</keyword>
<keyword id="KW-0057">Aromatic amino acid biosynthesis</keyword>
<keyword id="KW-0456">Lyase</keyword>
<keyword id="KW-0822">Tryptophan biosynthesis</keyword>
<dbReference type="EC" id="4.2.1.20" evidence="1"/>
<dbReference type="EMBL" id="AE008917">
    <property type="protein sequence ID" value="AAL53200.1"/>
    <property type="status" value="ALT_INIT"/>
    <property type="molecule type" value="Genomic_DNA"/>
</dbReference>
<dbReference type="PIR" id="AE3504">
    <property type="entry name" value="AE3504"/>
</dbReference>
<dbReference type="RefSeq" id="WP_004684553.1">
    <property type="nucleotide sequence ID" value="NZ_GG703778.1"/>
</dbReference>
<dbReference type="SMR" id="Q8YE59"/>
<dbReference type="GeneID" id="29594904"/>
<dbReference type="KEGG" id="bme:BMEI2019"/>
<dbReference type="KEGG" id="bmel:DK63_1472"/>
<dbReference type="PATRIC" id="fig|224914.52.peg.1550"/>
<dbReference type="eggNOG" id="COG0159">
    <property type="taxonomic scope" value="Bacteria"/>
</dbReference>
<dbReference type="PhylomeDB" id="Q8YE59"/>
<dbReference type="UniPathway" id="UPA00035">
    <property type="reaction ID" value="UER00044"/>
</dbReference>
<dbReference type="Proteomes" id="UP000000419">
    <property type="component" value="Chromosome I"/>
</dbReference>
<dbReference type="GO" id="GO:0005829">
    <property type="term" value="C:cytosol"/>
    <property type="evidence" value="ECO:0007669"/>
    <property type="project" value="TreeGrafter"/>
</dbReference>
<dbReference type="GO" id="GO:0004834">
    <property type="term" value="F:tryptophan synthase activity"/>
    <property type="evidence" value="ECO:0007669"/>
    <property type="project" value="UniProtKB-UniRule"/>
</dbReference>
<dbReference type="CDD" id="cd04724">
    <property type="entry name" value="Tryptophan_synthase_alpha"/>
    <property type="match status" value="1"/>
</dbReference>
<dbReference type="FunFam" id="3.20.20.70:FF:000037">
    <property type="entry name" value="Tryptophan synthase alpha chain"/>
    <property type="match status" value="1"/>
</dbReference>
<dbReference type="Gene3D" id="3.20.20.70">
    <property type="entry name" value="Aldolase class I"/>
    <property type="match status" value="1"/>
</dbReference>
<dbReference type="HAMAP" id="MF_00131">
    <property type="entry name" value="Trp_synth_alpha"/>
    <property type="match status" value="1"/>
</dbReference>
<dbReference type="InterPro" id="IPR013785">
    <property type="entry name" value="Aldolase_TIM"/>
</dbReference>
<dbReference type="InterPro" id="IPR011060">
    <property type="entry name" value="RibuloseP-bd_barrel"/>
</dbReference>
<dbReference type="InterPro" id="IPR018204">
    <property type="entry name" value="Trp_synthase_alpha_AS"/>
</dbReference>
<dbReference type="InterPro" id="IPR002028">
    <property type="entry name" value="Trp_synthase_suA"/>
</dbReference>
<dbReference type="NCBIfam" id="TIGR00262">
    <property type="entry name" value="trpA"/>
    <property type="match status" value="1"/>
</dbReference>
<dbReference type="PANTHER" id="PTHR43406:SF1">
    <property type="entry name" value="TRYPTOPHAN SYNTHASE ALPHA CHAIN, CHLOROPLASTIC"/>
    <property type="match status" value="1"/>
</dbReference>
<dbReference type="PANTHER" id="PTHR43406">
    <property type="entry name" value="TRYPTOPHAN SYNTHASE, ALPHA CHAIN"/>
    <property type="match status" value="1"/>
</dbReference>
<dbReference type="Pfam" id="PF00290">
    <property type="entry name" value="Trp_syntA"/>
    <property type="match status" value="1"/>
</dbReference>
<dbReference type="SUPFAM" id="SSF51366">
    <property type="entry name" value="Ribulose-phoshate binding barrel"/>
    <property type="match status" value="1"/>
</dbReference>
<dbReference type="PROSITE" id="PS00167">
    <property type="entry name" value="TRP_SYNTHASE_ALPHA"/>
    <property type="match status" value="1"/>
</dbReference>
<comment type="function">
    <text evidence="1">The alpha subunit is responsible for the aldol cleavage of indoleglycerol phosphate to indole and glyceraldehyde 3-phosphate.</text>
</comment>
<comment type="catalytic activity">
    <reaction evidence="1">
        <text>(1S,2R)-1-C-(indol-3-yl)glycerol 3-phosphate + L-serine = D-glyceraldehyde 3-phosphate + L-tryptophan + H2O</text>
        <dbReference type="Rhea" id="RHEA:10532"/>
        <dbReference type="ChEBI" id="CHEBI:15377"/>
        <dbReference type="ChEBI" id="CHEBI:33384"/>
        <dbReference type="ChEBI" id="CHEBI:57912"/>
        <dbReference type="ChEBI" id="CHEBI:58866"/>
        <dbReference type="ChEBI" id="CHEBI:59776"/>
        <dbReference type="EC" id="4.2.1.20"/>
    </reaction>
</comment>
<comment type="pathway">
    <text evidence="1">Amino-acid biosynthesis; L-tryptophan biosynthesis; L-tryptophan from chorismate: step 5/5.</text>
</comment>
<comment type="subunit">
    <text evidence="1">Tetramer of two alpha and two beta chains.</text>
</comment>
<comment type="similarity">
    <text evidence="1">Belongs to the TrpA family.</text>
</comment>
<comment type="sequence caution" evidence="2">
    <conflict type="erroneous initiation">
        <sequence resource="EMBL-CDS" id="AAL53200"/>
    </conflict>
</comment>
<name>TRPA_BRUME</name>
<accession>Q8YE59</accession>
<feature type="chain" id="PRO_0000098752" description="Tryptophan synthase alpha chain">
    <location>
        <begin position="1"/>
        <end position="279"/>
    </location>
</feature>
<feature type="active site" description="Proton acceptor" evidence="1">
    <location>
        <position position="50"/>
    </location>
</feature>
<feature type="active site" description="Proton acceptor" evidence="1">
    <location>
        <position position="61"/>
    </location>
</feature>
<gene>
    <name evidence="1" type="primary">trpA</name>
    <name type="ordered locus">BMEI2019</name>
</gene>
<organism>
    <name type="scientific">Brucella melitensis biotype 1 (strain ATCC 23456 / CCUG 17765 / NCTC 10094 / 16M)</name>
    <dbReference type="NCBI Taxonomy" id="224914"/>
    <lineage>
        <taxon>Bacteria</taxon>
        <taxon>Pseudomonadati</taxon>
        <taxon>Pseudomonadota</taxon>
        <taxon>Alphaproteobacteria</taxon>
        <taxon>Hyphomicrobiales</taxon>
        <taxon>Brucellaceae</taxon>
        <taxon>Brucella/Ochrobactrum group</taxon>
        <taxon>Brucella</taxon>
    </lineage>
</organism>